<reference key="1">
    <citation type="journal article" date="2009" name="J. Bacteriol.">
        <title>Complete genome sequence of the extremophilic Bacillus cereus strain Q1 with industrial applications.</title>
        <authorList>
            <person name="Xiong Z."/>
            <person name="Jiang Y."/>
            <person name="Qi D."/>
            <person name="Lu H."/>
            <person name="Yang F."/>
            <person name="Yang J."/>
            <person name="Chen L."/>
            <person name="Sun L."/>
            <person name="Xu X."/>
            <person name="Xue Y."/>
            <person name="Zhu Y."/>
            <person name="Jin Q."/>
        </authorList>
    </citation>
    <scope>NUCLEOTIDE SEQUENCE [LARGE SCALE GENOMIC DNA]</scope>
    <source>
        <strain>Q1</strain>
    </source>
</reference>
<organism>
    <name type="scientific">Bacillus cereus (strain Q1)</name>
    <dbReference type="NCBI Taxonomy" id="361100"/>
    <lineage>
        <taxon>Bacteria</taxon>
        <taxon>Bacillati</taxon>
        <taxon>Bacillota</taxon>
        <taxon>Bacilli</taxon>
        <taxon>Bacillales</taxon>
        <taxon>Bacillaceae</taxon>
        <taxon>Bacillus</taxon>
        <taxon>Bacillus cereus group</taxon>
    </lineage>
</organism>
<gene>
    <name evidence="1" type="primary">prpE</name>
    <name type="ordered locus">BCQ_1269</name>
</gene>
<comment type="function">
    <text evidence="1">Asymmetrically hydrolyzes Ap4p to yield AMP and ATP.</text>
</comment>
<comment type="catalytic activity">
    <reaction evidence="1">
        <text>P(1),P(4)-bis(5'-guanosyl) tetraphosphate + H2O = GMP + GTP + 2 H(+)</text>
        <dbReference type="Rhea" id="RHEA:22484"/>
        <dbReference type="ChEBI" id="CHEBI:15377"/>
        <dbReference type="ChEBI" id="CHEBI:15378"/>
        <dbReference type="ChEBI" id="CHEBI:37565"/>
        <dbReference type="ChEBI" id="CHEBI:57553"/>
        <dbReference type="ChEBI" id="CHEBI:58115"/>
        <dbReference type="EC" id="3.6.1.17"/>
    </reaction>
</comment>
<comment type="cofactor">
    <cofactor evidence="1">
        <name>Ni(2+)</name>
        <dbReference type="ChEBI" id="CHEBI:49786"/>
    </cofactor>
</comment>
<comment type="similarity">
    <text evidence="1">Belongs to the PrpE family.</text>
</comment>
<dbReference type="EC" id="3.6.1.17" evidence="1"/>
<dbReference type="EMBL" id="CP000227">
    <property type="protein sequence ID" value="ACM11699.1"/>
    <property type="molecule type" value="Genomic_DNA"/>
</dbReference>
<dbReference type="SMR" id="B9IU03"/>
<dbReference type="KEGG" id="bcq:BCQ_1269"/>
<dbReference type="HOGENOM" id="CLU_023125_3_0_9"/>
<dbReference type="Proteomes" id="UP000000441">
    <property type="component" value="Chromosome"/>
</dbReference>
<dbReference type="GO" id="GO:0005737">
    <property type="term" value="C:cytoplasm"/>
    <property type="evidence" value="ECO:0007669"/>
    <property type="project" value="TreeGrafter"/>
</dbReference>
<dbReference type="GO" id="GO:0004081">
    <property type="term" value="F:bis(5'-nucleosyl)-tetraphosphatase (asymmetrical) activity"/>
    <property type="evidence" value="ECO:0007669"/>
    <property type="project" value="UniProtKB-UniRule"/>
</dbReference>
<dbReference type="GO" id="GO:0005525">
    <property type="term" value="F:GTP binding"/>
    <property type="evidence" value="ECO:0007669"/>
    <property type="project" value="UniProtKB-KW"/>
</dbReference>
<dbReference type="GO" id="GO:0016151">
    <property type="term" value="F:nickel cation binding"/>
    <property type="evidence" value="ECO:0007669"/>
    <property type="project" value="UniProtKB-UniRule"/>
</dbReference>
<dbReference type="GO" id="GO:0016791">
    <property type="term" value="F:phosphatase activity"/>
    <property type="evidence" value="ECO:0007669"/>
    <property type="project" value="TreeGrafter"/>
</dbReference>
<dbReference type="CDD" id="cd07423">
    <property type="entry name" value="MPP_Prp_like"/>
    <property type="match status" value="1"/>
</dbReference>
<dbReference type="Gene3D" id="3.60.21.10">
    <property type="match status" value="1"/>
</dbReference>
<dbReference type="HAMAP" id="MF_01443">
    <property type="entry name" value="PrpE"/>
    <property type="match status" value="1"/>
</dbReference>
<dbReference type="InterPro" id="IPR050126">
    <property type="entry name" value="Ap4A_hydrolase"/>
</dbReference>
<dbReference type="InterPro" id="IPR023937">
    <property type="entry name" value="Bis(5'-nucleosyl)-tetraP_PrpE"/>
</dbReference>
<dbReference type="InterPro" id="IPR004843">
    <property type="entry name" value="Calcineurin-like_PHP_ApaH"/>
</dbReference>
<dbReference type="InterPro" id="IPR029052">
    <property type="entry name" value="Metallo-depent_PP-like"/>
</dbReference>
<dbReference type="InterPro" id="IPR041780">
    <property type="entry name" value="MPP_PrpE-like"/>
</dbReference>
<dbReference type="NCBIfam" id="NF010148">
    <property type="entry name" value="PRK13625.1"/>
    <property type="match status" value="1"/>
</dbReference>
<dbReference type="PANTHER" id="PTHR42850:SF7">
    <property type="entry name" value="BIS(5'-NUCLEOSYL)-TETRAPHOSPHATASE PRPE [ASYMMETRICAL]"/>
    <property type="match status" value="1"/>
</dbReference>
<dbReference type="PANTHER" id="PTHR42850">
    <property type="entry name" value="METALLOPHOSPHOESTERASE"/>
    <property type="match status" value="1"/>
</dbReference>
<dbReference type="Pfam" id="PF00149">
    <property type="entry name" value="Metallophos"/>
    <property type="match status" value="1"/>
</dbReference>
<dbReference type="SUPFAM" id="SSF56300">
    <property type="entry name" value="Metallo-dependent phosphatases"/>
    <property type="match status" value="1"/>
</dbReference>
<proteinExistence type="inferred from homology"/>
<name>PRPE_BACCQ</name>
<keyword id="KW-0342">GTP-binding</keyword>
<keyword id="KW-0378">Hydrolase</keyword>
<keyword id="KW-0533">Nickel</keyword>
<keyword id="KW-0547">Nucleotide-binding</keyword>
<accession>B9IU03</accession>
<feature type="chain" id="PRO_1000184944" description="Bis(5'-nucleosyl)-tetraphosphatase PrpE [asymmetrical]">
    <location>
        <begin position="1"/>
        <end position="246"/>
    </location>
</feature>
<sequence>MKYDIIGDIHGCFQEFQDLTKKLGYNWNSDLPIHPDQRKLAFVGDITDRGPHSLRMIEIVWELVINKKVAYYAPGNHCNKLYRFFLGRNVTIAHGLETTVAEYEALPSHQQNMIKEKFITLYEQSPLYHVLDEKRLIVCHAGIRQDYIGRKDKKVQTFVLYGDITGEKHADGSPVRRDWAKEYKGTSWIVYGHTPVKEPRFVNHTVNIDTGAVFGGKLTGLRYPEMEIVSVPSSLPFVPEKFRPIS</sequence>
<evidence type="ECO:0000255" key="1">
    <source>
        <dbReference type="HAMAP-Rule" id="MF_01443"/>
    </source>
</evidence>
<protein>
    <recommendedName>
        <fullName evidence="1">Bis(5'-nucleosyl)-tetraphosphatase PrpE [asymmetrical]</fullName>
        <ecNumber evidence="1">3.6.1.17</ecNumber>
    </recommendedName>
    <alternativeName>
        <fullName evidence="1">Ap4A hydrolase</fullName>
    </alternativeName>
    <alternativeName>
        <fullName evidence="1">Diadenosine 5',5'''-P1,P4-tetraphosphate asymmetrical hydrolase</fullName>
        <shortName evidence="1">Diadenosine tetraphosphatase</shortName>
    </alternativeName>
</protein>